<feature type="chain" id="PRO_1000145299" description="ATP synthase subunit a">
    <location>
        <begin position="1"/>
        <end position="289"/>
    </location>
</feature>
<feature type="transmembrane region" description="Helical" evidence="1">
    <location>
        <begin position="43"/>
        <end position="63"/>
    </location>
</feature>
<feature type="transmembrane region" description="Helical" evidence="1">
    <location>
        <begin position="104"/>
        <end position="124"/>
    </location>
</feature>
<feature type="transmembrane region" description="Helical" evidence="1">
    <location>
        <begin position="160"/>
        <end position="180"/>
    </location>
</feature>
<feature type="transmembrane region" description="Helical" evidence="1">
    <location>
        <begin position="193"/>
        <end position="213"/>
    </location>
</feature>
<feature type="transmembrane region" description="Helical" evidence="1">
    <location>
        <begin position="232"/>
        <end position="252"/>
    </location>
</feature>
<feature type="transmembrane region" description="Helical" evidence="1">
    <location>
        <begin position="259"/>
        <end position="279"/>
    </location>
</feature>
<organism>
    <name type="scientific">Pseudomonas aeruginosa (strain LESB58)</name>
    <dbReference type="NCBI Taxonomy" id="557722"/>
    <lineage>
        <taxon>Bacteria</taxon>
        <taxon>Pseudomonadati</taxon>
        <taxon>Pseudomonadota</taxon>
        <taxon>Gammaproteobacteria</taxon>
        <taxon>Pseudomonadales</taxon>
        <taxon>Pseudomonadaceae</taxon>
        <taxon>Pseudomonas</taxon>
    </lineage>
</organism>
<sequence length="289" mass="31921">MAAETASGYIQHHLQNLTFGRLPNGDWGFAHTAEQAKEMGFWAFHVDTLGWSVLLGVVFLFIFRLAAKKATSGQPGGLQNFVEVMVEFVDTSVKDTFHGRNPLIAPLALTVFVWIFLLNLIDLVPVDYLPMLAAKITGDEHLFFRAVATTDPNATLGLSISVFALIVFYSIKVKGIGGFLGELTLHPFSSKNIVVQILLIPVNFLLEFVTLIAKPVSLALRLFGNMYAGELIFILIAVMFGSGMFLLSALGVALNWAWAVFHILIITLQAFIFMMLTIVYLSMAHEDNH</sequence>
<protein>
    <recommendedName>
        <fullName evidence="1">ATP synthase subunit a</fullName>
    </recommendedName>
    <alternativeName>
        <fullName evidence="1">ATP synthase F0 sector subunit a</fullName>
    </alternativeName>
    <alternativeName>
        <fullName evidence="1">F-ATPase subunit 6</fullName>
    </alternativeName>
</protein>
<evidence type="ECO:0000255" key="1">
    <source>
        <dbReference type="HAMAP-Rule" id="MF_01393"/>
    </source>
</evidence>
<reference key="1">
    <citation type="journal article" date="2009" name="Genome Res.">
        <title>Newly introduced genomic prophage islands are critical determinants of in vivo competitiveness in the Liverpool epidemic strain of Pseudomonas aeruginosa.</title>
        <authorList>
            <person name="Winstanley C."/>
            <person name="Langille M.G.I."/>
            <person name="Fothergill J.L."/>
            <person name="Kukavica-Ibrulj I."/>
            <person name="Paradis-Bleau C."/>
            <person name="Sanschagrin F."/>
            <person name="Thomson N.R."/>
            <person name="Winsor G.L."/>
            <person name="Quail M.A."/>
            <person name="Lennard N."/>
            <person name="Bignell A."/>
            <person name="Clarke L."/>
            <person name="Seeger K."/>
            <person name="Saunders D."/>
            <person name="Harris D."/>
            <person name="Parkhill J."/>
            <person name="Hancock R.E.W."/>
            <person name="Brinkman F.S.L."/>
            <person name="Levesque R.C."/>
        </authorList>
    </citation>
    <scope>NUCLEOTIDE SEQUENCE [LARGE SCALE GENOMIC DNA]</scope>
    <source>
        <strain>LESB58</strain>
    </source>
</reference>
<gene>
    <name evidence="1" type="primary">atpB</name>
    <name type="ordered locus">PLES_59561</name>
</gene>
<proteinExistence type="inferred from homology"/>
<keyword id="KW-0066">ATP synthesis</keyword>
<keyword id="KW-0997">Cell inner membrane</keyword>
<keyword id="KW-1003">Cell membrane</keyword>
<keyword id="KW-0138">CF(0)</keyword>
<keyword id="KW-0375">Hydrogen ion transport</keyword>
<keyword id="KW-0406">Ion transport</keyword>
<keyword id="KW-0472">Membrane</keyword>
<keyword id="KW-0812">Transmembrane</keyword>
<keyword id="KW-1133">Transmembrane helix</keyword>
<keyword id="KW-0813">Transport</keyword>
<dbReference type="EMBL" id="FM209186">
    <property type="protein sequence ID" value="CAW30710.1"/>
    <property type="molecule type" value="Genomic_DNA"/>
</dbReference>
<dbReference type="RefSeq" id="WP_003100237.1">
    <property type="nucleotide sequence ID" value="NC_011770.1"/>
</dbReference>
<dbReference type="SMR" id="B7V797"/>
<dbReference type="GeneID" id="77224113"/>
<dbReference type="KEGG" id="pag:PLES_59561"/>
<dbReference type="HOGENOM" id="CLU_041018_1_0_6"/>
<dbReference type="GO" id="GO:0005886">
    <property type="term" value="C:plasma membrane"/>
    <property type="evidence" value="ECO:0007669"/>
    <property type="project" value="UniProtKB-SubCell"/>
</dbReference>
<dbReference type="GO" id="GO:0045259">
    <property type="term" value="C:proton-transporting ATP synthase complex"/>
    <property type="evidence" value="ECO:0007669"/>
    <property type="project" value="UniProtKB-KW"/>
</dbReference>
<dbReference type="GO" id="GO:0046933">
    <property type="term" value="F:proton-transporting ATP synthase activity, rotational mechanism"/>
    <property type="evidence" value="ECO:0007669"/>
    <property type="project" value="UniProtKB-UniRule"/>
</dbReference>
<dbReference type="GO" id="GO:0042777">
    <property type="term" value="P:proton motive force-driven plasma membrane ATP synthesis"/>
    <property type="evidence" value="ECO:0007669"/>
    <property type="project" value="TreeGrafter"/>
</dbReference>
<dbReference type="CDD" id="cd00310">
    <property type="entry name" value="ATP-synt_Fo_a_6"/>
    <property type="match status" value="1"/>
</dbReference>
<dbReference type="FunFam" id="1.20.120.220:FF:000002">
    <property type="entry name" value="ATP synthase subunit a"/>
    <property type="match status" value="1"/>
</dbReference>
<dbReference type="Gene3D" id="1.20.120.220">
    <property type="entry name" value="ATP synthase, F0 complex, subunit A"/>
    <property type="match status" value="1"/>
</dbReference>
<dbReference type="HAMAP" id="MF_01393">
    <property type="entry name" value="ATP_synth_a_bact"/>
    <property type="match status" value="1"/>
</dbReference>
<dbReference type="InterPro" id="IPR045082">
    <property type="entry name" value="ATP_syn_F0_a_bact/chloroplast"/>
</dbReference>
<dbReference type="InterPro" id="IPR000568">
    <property type="entry name" value="ATP_synth_F0_asu"/>
</dbReference>
<dbReference type="InterPro" id="IPR023011">
    <property type="entry name" value="ATP_synth_F0_asu_AS"/>
</dbReference>
<dbReference type="InterPro" id="IPR035908">
    <property type="entry name" value="F0_ATP_A_sf"/>
</dbReference>
<dbReference type="NCBIfam" id="TIGR01131">
    <property type="entry name" value="ATP_synt_6_or_A"/>
    <property type="match status" value="1"/>
</dbReference>
<dbReference type="NCBIfam" id="NF004477">
    <property type="entry name" value="PRK05815.1-1"/>
    <property type="match status" value="1"/>
</dbReference>
<dbReference type="PANTHER" id="PTHR42823">
    <property type="entry name" value="ATP SYNTHASE SUBUNIT A, CHLOROPLASTIC"/>
    <property type="match status" value="1"/>
</dbReference>
<dbReference type="PANTHER" id="PTHR42823:SF3">
    <property type="entry name" value="ATP SYNTHASE SUBUNIT A, CHLOROPLASTIC"/>
    <property type="match status" value="1"/>
</dbReference>
<dbReference type="Pfam" id="PF00119">
    <property type="entry name" value="ATP-synt_A"/>
    <property type="match status" value="1"/>
</dbReference>
<dbReference type="SUPFAM" id="SSF81336">
    <property type="entry name" value="F1F0 ATP synthase subunit A"/>
    <property type="match status" value="1"/>
</dbReference>
<dbReference type="PROSITE" id="PS00449">
    <property type="entry name" value="ATPASE_A"/>
    <property type="match status" value="1"/>
</dbReference>
<accession>B7V797</accession>
<name>ATP6_PSEA8</name>
<comment type="function">
    <text evidence="1">Key component of the proton channel; it plays a direct role in the translocation of protons across the membrane.</text>
</comment>
<comment type="subunit">
    <text evidence="1">F-type ATPases have 2 components, CF(1) - the catalytic core - and CF(0) - the membrane proton channel. CF(1) has five subunits: alpha(3), beta(3), gamma(1), delta(1), epsilon(1). CF(0) has three main subunits: a(1), b(2) and c(9-12). The alpha and beta chains form an alternating ring which encloses part of the gamma chain. CF(1) is attached to CF(0) by a central stalk formed by the gamma and epsilon chains, while a peripheral stalk is formed by the delta and b chains.</text>
</comment>
<comment type="subcellular location">
    <subcellularLocation>
        <location evidence="1">Cell inner membrane</location>
        <topology evidence="1">Multi-pass membrane protein</topology>
    </subcellularLocation>
</comment>
<comment type="similarity">
    <text evidence="1">Belongs to the ATPase A chain family.</text>
</comment>